<organism>
    <name type="scientific">Solanum tuberosum</name>
    <name type="common">Potato</name>
    <dbReference type="NCBI Taxonomy" id="4113"/>
    <lineage>
        <taxon>Eukaryota</taxon>
        <taxon>Viridiplantae</taxon>
        <taxon>Streptophyta</taxon>
        <taxon>Embryophyta</taxon>
        <taxon>Tracheophyta</taxon>
        <taxon>Spermatophyta</taxon>
        <taxon>Magnoliopsida</taxon>
        <taxon>eudicotyledons</taxon>
        <taxon>Gunneridae</taxon>
        <taxon>Pentapetalae</taxon>
        <taxon>asterids</taxon>
        <taxon>lamiids</taxon>
        <taxon>Solanales</taxon>
        <taxon>Solanaceae</taxon>
        <taxon>Solanoideae</taxon>
        <taxon>Solaneae</taxon>
        <taxon>Solanum</taxon>
    </lineage>
</organism>
<dbReference type="EMBL" id="DQ231562">
    <property type="protein sequence ID" value="ABB90036.1"/>
    <property type="molecule type" value="Genomic_DNA"/>
</dbReference>
<dbReference type="EMBL" id="DQ386163">
    <property type="protein sequence ID" value="ABD47050.1"/>
    <property type="molecule type" value="Genomic_DNA"/>
</dbReference>
<dbReference type="RefSeq" id="YP_635632.1">
    <property type="nucleotide sequence ID" value="NC_008096.2"/>
</dbReference>
<dbReference type="SMR" id="Q2VEI3"/>
<dbReference type="FunCoup" id="Q2VEI3">
    <property type="interactions" value="32"/>
</dbReference>
<dbReference type="STRING" id="4113.Q2VEI3"/>
<dbReference type="GeneID" id="4099860"/>
<dbReference type="KEGG" id="sot:4099860"/>
<dbReference type="InParanoid" id="Q2VEI3"/>
<dbReference type="Proteomes" id="UP000011115">
    <property type="component" value="Unassembled WGS sequence"/>
</dbReference>
<dbReference type="GO" id="GO:0009535">
    <property type="term" value="C:chloroplast thylakoid membrane"/>
    <property type="evidence" value="ECO:0007669"/>
    <property type="project" value="UniProtKB-SubCell"/>
</dbReference>
<dbReference type="GO" id="GO:0009512">
    <property type="term" value="C:cytochrome b6f complex"/>
    <property type="evidence" value="ECO:0007669"/>
    <property type="project" value="InterPro"/>
</dbReference>
<dbReference type="GO" id="GO:0045158">
    <property type="term" value="F:electron transporter, transferring electrons within cytochrome b6/f complex of photosystem II activity"/>
    <property type="evidence" value="ECO:0007669"/>
    <property type="project" value="InterPro"/>
</dbReference>
<dbReference type="GO" id="GO:0017004">
    <property type="term" value="P:cytochrome complex assembly"/>
    <property type="evidence" value="ECO:0007669"/>
    <property type="project" value="UniProtKB-UniRule"/>
</dbReference>
<dbReference type="GO" id="GO:0015979">
    <property type="term" value="P:photosynthesis"/>
    <property type="evidence" value="ECO:0007669"/>
    <property type="project" value="UniProtKB-KW"/>
</dbReference>
<dbReference type="HAMAP" id="MF_00395">
    <property type="entry name" value="Cytb6_f_PetN"/>
    <property type="match status" value="1"/>
</dbReference>
<dbReference type="InterPro" id="IPR036143">
    <property type="entry name" value="Cytochr_b6-f_cplx_su8_sf"/>
</dbReference>
<dbReference type="InterPro" id="IPR005497">
    <property type="entry name" value="Cytochrome_b6-f_cplx_su8"/>
</dbReference>
<dbReference type="Pfam" id="PF03742">
    <property type="entry name" value="PetN"/>
    <property type="match status" value="1"/>
</dbReference>
<dbReference type="SUPFAM" id="SSF103451">
    <property type="entry name" value="PetN subunit of the cytochrome b6f complex"/>
    <property type="match status" value="1"/>
</dbReference>
<comment type="function">
    <text evidence="1">Component of the cytochrome b6-f complex, which mediates electron transfer between photosystem II (PSII) and photosystem I (PSI), cyclic electron flow around PSI, and state transitions.</text>
</comment>
<comment type="subunit">
    <text evidence="1">The 4 large subunits of the cytochrome b6-f complex are cytochrome b6, subunit IV (17 kDa polypeptide, PetD), cytochrome f and the Rieske protein, while the 4 small subunits are PetG, PetL, PetM and PetN. The complex functions as a dimer.</text>
</comment>
<comment type="subcellular location">
    <subcellularLocation>
        <location>Plastid</location>
        <location>Chloroplast thylakoid membrane</location>
        <topology>Single-pass membrane protein</topology>
    </subcellularLocation>
</comment>
<comment type="similarity">
    <text evidence="1">Belongs to the PetN family.</text>
</comment>
<protein>
    <recommendedName>
        <fullName evidence="1">Cytochrome b6-f complex subunit 8</fullName>
    </recommendedName>
    <alternativeName>
        <fullName evidence="1">Cytochrome b6-f complex subunit PetN</fullName>
    </alternativeName>
    <alternativeName>
        <fullName evidence="1">Cytochrome b6-f complex subunit VIII</fullName>
    </alternativeName>
</protein>
<evidence type="ECO:0000255" key="1">
    <source>
        <dbReference type="HAMAP-Rule" id="MF_00395"/>
    </source>
</evidence>
<sequence>MDIVSLAWAALMVVFTFSLSLVVWGRSGL</sequence>
<feature type="chain" id="PRO_0000275566" description="Cytochrome b6-f complex subunit 8">
    <location>
        <begin position="1"/>
        <end position="29"/>
    </location>
</feature>
<feature type="transmembrane region" description="Helical" evidence="1">
    <location>
        <begin position="3"/>
        <end position="23"/>
    </location>
</feature>
<gene>
    <name evidence="1" type="primary">petN</name>
</gene>
<geneLocation type="chloroplast"/>
<proteinExistence type="inferred from homology"/>
<keyword id="KW-0150">Chloroplast</keyword>
<keyword id="KW-0249">Electron transport</keyword>
<keyword id="KW-0472">Membrane</keyword>
<keyword id="KW-0602">Photosynthesis</keyword>
<keyword id="KW-0934">Plastid</keyword>
<keyword id="KW-1185">Reference proteome</keyword>
<keyword id="KW-0793">Thylakoid</keyword>
<keyword id="KW-0812">Transmembrane</keyword>
<keyword id="KW-1133">Transmembrane helix</keyword>
<keyword id="KW-0813">Transport</keyword>
<reference key="1">
    <citation type="journal article" date="2006" name="Plant Cell Rep.">
        <title>The complete chloroplast genome sequences of Solanum tuberosum and comparative analysis with Solanaceae species identified the presence of a 241-bp deletion in cultivated potato chloroplast DNA sequence.</title>
        <authorList>
            <person name="Chung H.-J."/>
            <person name="Jung J.D."/>
            <person name="Park H.-W."/>
            <person name="Kim J.-H."/>
            <person name="Cha H.W."/>
            <person name="Min S.R."/>
            <person name="Jeong W.-J."/>
            <person name="Liu J.R."/>
        </authorList>
    </citation>
    <scope>NUCLEOTIDE SEQUENCE [LARGE SCALE GENOMIC DNA]</scope>
    <source>
        <strain>cv. Desiree</strain>
    </source>
</reference>
<reference key="2">
    <citation type="submission" date="2006-02" db="EMBL/GenBank/DDBJ databases">
        <title>Complete chloroplast genome sequences of Solanum tuberosum cultivar Desiree and comparative analyses with other Solanaceae genomes.</title>
        <authorList>
            <person name="Gargano D."/>
            <person name="Scotti N."/>
            <person name="Vezzi A."/>
            <person name="Bilardi A."/>
            <person name="Valle G."/>
            <person name="Grillo S."/>
            <person name="Cardi T."/>
        </authorList>
    </citation>
    <scope>NUCLEOTIDE SEQUENCE [LARGE SCALE GENOMIC DNA]</scope>
    <source>
        <strain>cv. Desiree</strain>
    </source>
</reference>
<accession>Q2VEI3</accession>
<name>PETN_SOLTU</name>